<feature type="chain" id="PRO_0000272597" description="Nod factor export ATP-binding protein I">
    <location>
        <begin position="1"/>
        <end position="304"/>
    </location>
</feature>
<feature type="domain" description="ABC transporter" evidence="1">
    <location>
        <begin position="6"/>
        <end position="236"/>
    </location>
</feature>
<feature type="binding site" evidence="1">
    <location>
        <begin position="38"/>
        <end position="45"/>
    </location>
    <ligand>
        <name>ATP</name>
        <dbReference type="ChEBI" id="CHEBI:30616"/>
    </ligand>
</feature>
<reference key="1">
    <citation type="journal article" date="2004" name="Proc. Natl. Acad. Sci. U.S.A.">
        <title>Genomic plasticity of the causative agent of melioidosis, Burkholderia pseudomallei.</title>
        <authorList>
            <person name="Holden M.T.G."/>
            <person name="Titball R.W."/>
            <person name="Peacock S.J."/>
            <person name="Cerdeno-Tarraga A.-M."/>
            <person name="Atkins T."/>
            <person name="Crossman L.C."/>
            <person name="Pitt T."/>
            <person name="Churcher C."/>
            <person name="Mungall K.L."/>
            <person name="Bentley S.D."/>
            <person name="Sebaihia M."/>
            <person name="Thomson N.R."/>
            <person name="Bason N."/>
            <person name="Beacham I.R."/>
            <person name="Brooks K."/>
            <person name="Brown K.A."/>
            <person name="Brown N.F."/>
            <person name="Challis G.L."/>
            <person name="Cherevach I."/>
            <person name="Chillingworth T."/>
            <person name="Cronin A."/>
            <person name="Crossett B."/>
            <person name="Davis P."/>
            <person name="DeShazer D."/>
            <person name="Feltwell T."/>
            <person name="Fraser A."/>
            <person name="Hance Z."/>
            <person name="Hauser H."/>
            <person name="Holroyd S."/>
            <person name="Jagels K."/>
            <person name="Keith K.E."/>
            <person name="Maddison M."/>
            <person name="Moule S."/>
            <person name="Price C."/>
            <person name="Quail M.A."/>
            <person name="Rabbinowitsch E."/>
            <person name="Rutherford K."/>
            <person name="Sanders M."/>
            <person name="Simmonds M."/>
            <person name="Songsivilai S."/>
            <person name="Stevens K."/>
            <person name="Tumapa S."/>
            <person name="Vesaratchavest M."/>
            <person name="Whitehead S."/>
            <person name="Yeats C."/>
            <person name="Barrell B.G."/>
            <person name="Oyston P.C.F."/>
            <person name="Parkhill J."/>
        </authorList>
    </citation>
    <scope>NUCLEOTIDE SEQUENCE [LARGE SCALE GENOMIC DNA]</scope>
    <source>
        <strain>K96243</strain>
    </source>
</reference>
<accession>Q63TX3</accession>
<dbReference type="EC" id="7.6.2.-" evidence="1"/>
<dbReference type="EMBL" id="BX571965">
    <property type="protein sequence ID" value="CAH35843.1"/>
    <property type="status" value="ALT_INIT"/>
    <property type="molecule type" value="Genomic_DNA"/>
</dbReference>
<dbReference type="RefSeq" id="WP_004538328.1">
    <property type="nucleotide sequence ID" value="NZ_CP009538.1"/>
</dbReference>
<dbReference type="RefSeq" id="YP_108443.1">
    <property type="nucleotide sequence ID" value="NC_006350.1"/>
</dbReference>
<dbReference type="SMR" id="Q63TX3"/>
<dbReference type="STRING" id="272560.BPSL1844"/>
<dbReference type="KEGG" id="bps:BPSL1844"/>
<dbReference type="PATRIC" id="fig|272560.51.peg.3973"/>
<dbReference type="eggNOG" id="COG1131">
    <property type="taxonomic scope" value="Bacteria"/>
</dbReference>
<dbReference type="Proteomes" id="UP000000605">
    <property type="component" value="Chromosome 1"/>
</dbReference>
<dbReference type="GO" id="GO:0005886">
    <property type="term" value="C:plasma membrane"/>
    <property type="evidence" value="ECO:0007669"/>
    <property type="project" value="UniProtKB-SubCell"/>
</dbReference>
<dbReference type="GO" id="GO:0005524">
    <property type="term" value="F:ATP binding"/>
    <property type="evidence" value="ECO:0007669"/>
    <property type="project" value="UniProtKB-KW"/>
</dbReference>
<dbReference type="GO" id="GO:0016887">
    <property type="term" value="F:ATP hydrolysis activity"/>
    <property type="evidence" value="ECO:0007669"/>
    <property type="project" value="InterPro"/>
</dbReference>
<dbReference type="GO" id="GO:0022857">
    <property type="term" value="F:transmembrane transporter activity"/>
    <property type="evidence" value="ECO:0007669"/>
    <property type="project" value="InterPro"/>
</dbReference>
<dbReference type="CDD" id="cd03263">
    <property type="entry name" value="ABC_subfamily_A"/>
    <property type="match status" value="1"/>
</dbReference>
<dbReference type="FunFam" id="3.40.50.300:FF:000589">
    <property type="entry name" value="ABC transporter, ATP-binding subunit"/>
    <property type="match status" value="1"/>
</dbReference>
<dbReference type="Gene3D" id="3.40.50.300">
    <property type="entry name" value="P-loop containing nucleotide triphosphate hydrolases"/>
    <property type="match status" value="1"/>
</dbReference>
<dbReference type="InterPro" id="IPR003593">
    <property type="entry name" value="AAA+_ATPase"/>
</dbReference>
<dbReference type="InterPro" id="IPR003439">
    <property type="entry name" value="ABC_transporter-like_ATP-bd"/>
</dbReference>
<dbReference type="InterPro" id="IPR017871">
    <property type="entry name" value="ABC_transporter-like_CS"/>
</dbReference>
<dbReference type="InterPro" id="IPR050763">
    <property type="entry name" value="ABC_transporter_ATP-binding"/>
</dbReference>
<dbReference type="InterPro" id="IPR005978">
    <property type="entry name" value="ABC_transptNodI"/>
</dbReference>
<dbReference type="InterPro" id="IPR027417">
    <property type="entry name" value="P-loop_NTPase"/>
</dbReference>
<dbReference type="NCBIfam" id="TIGR01288">
    <property type="entry name" value="nodI"/>
    <property type="match status" value="1"/>
</dbReference>
<dbReference type="NCBIfam" id="NF010060">
    <property type="entry name" value="PRK13537.1"/>
    <property type="match status" value="1"/>
</dbReference>
<dbReference type="PANTHER" id="PTHR42711">
    <property type="entry name" value="ABC TRANSPORTER ATP-BINDING PROTEIN"/>
    <property type="match status" value="1"/>
</dbReference>
<dbReference type="PANTHER" id="PTHR42711:SF5">
    <property type="entry name" value="ABC TRANSPORTER ATP-BINDING PROTEIN NATA"/>
    <property type="match status" value="1"/>
</dbReference>
<dbReference type="Pfam" id="PF00005">
    <property type="entry name" value="ABC_tran"/>
    <property type="match status" value="1"/>
</dbReference>
<dbReference type="SMART" id="SM00382">
    <property type="entry name" value="AAA"/>
    <property type="match status" value="1"/>
</dbReference>
<dbReference type="SUPFAM" id="SSF52540">
    <property type="entry name" value="P-loop containing nucleoside triphosphate hydrolases"/>
    <property type="match status" value="1"/>
</dbReference>
<dbReference type="PROSITE" id="PS00211">
    <property type="entry name" value="ABC_TRANSPORTER_1"/>
    <property type="match status" value="1"/>
</dbReference>
<dbReference type="PROSITE" id="PS50893">
    <property type="entry name" value="ABC_TRANSPORTER_2"/>
    <property type="match status" value="1"/>
</dbReference>
<dbReference type="PROSITE" id="PS51240">
    <property type="entry name" value="NODI"/>
    <property type="match status" value="1"/>
</dbReference>
<keyword id="KW-0067">ATP-binding</keyword>
<keyword id="KW-0997">Cell inner membrane</keyword>
<keyword id="KW-1003">Cell membrane</keyword>
<keyword id="KW-0472">Membrane</keyword>
<keyword id="KW-0536">Nodulation</keyword>
<keyword id="KW-0547">Nucleotide-binding</keyword>
<keyword id="KW-1185">Reference proteome</keyword>
<keyword id="KW-1278">Translocase</keyword>
<keyword id="KW-0813">Transport</keyword>
<gene>
    <name evidence="1" type="primary">nodI</name>
    <name type="ordered locus">BPSL1844</name>
</gene>
<evidence type="ECO:0000255" key="1">
    <source>
        <dbReference type="HAMAP-Rule" id="MF_01704"/>
    </source>
</evidence>
<evidence type="ECO:0000305" key="2"/>
<name>NODI_BURPS</name>
<comment type="function">
    <text evidence="1">Part of the ABC transporter complex NodIJ involved in the export of the nodulation factors (Nod factors), the bacterial signal molecules that induce symbiosis and subsequent nodulation induction. Nod factors are LCO (lipo-chitin oligosaccharide), a modified beta-1,4-linked N-acetylglucosamine oligosaccharide. This subunit is responsible for energy coupling to the transport system.</text>
</comment>
<comment type="subunit">
    <text evidence="1">The complex is composed of two ATP-binding proteins (NodI) and two transmembrane proteins (NodJ).</text>
</comment>
<comment type="subcellular location">
    <subcellularLocation>
        <location evidence="1">Cell inner membrane</location>
        <topology evidence="1">Peripheral membrane protein</topology>
    </subcellularLocation>
</comment>
<comment type="similarity">
    <text evidence="1">Belongs to the ABC transporter superfamily. Lipooligosaccharide exporter (TC 3.A.1.102) family.</text>
</comment>
<comment type="sequence caution" evidence="2">
    <conflict type="erroneous initiation">
        <sequence resource="EMBL-CDS" id="CAH35843"/>
    </conflict>
</comment>
<sequence>MSVAPIDFQQVEKRYDDKLVVDGLSFHVQPGECFGLLGPNGAGKTTTLKMLLGITHPDAGSISLCGEPVPSRARHARQRVGVVPQFDNLDPDFTVRENLLVFARYFGLTAHAARALVPPLLEFAKLESKADAKVGELSGGMKRRLTLARALVNDPDVLVLDEPTTGLDPQARHLMWERLRSLLARGKTILLTTHFMEEAERLCHRLCVIEEGRKIAEGAPRMLIEAEIGCDVIEIYGPDPVQLRDELAPFAERTEISGETLFCYVDNPEPIHARLKGRTGLRYLHRPANLEDVFLRLTGREMLD</sequence>
<organism>
    <name type="scientific">Burkholderia pseudomallei (strain K96243)</name>
    <dbReference type="NCBI Taxonomy" id="272560"/>
    <lineage>
        <taxon>Bacteria</taxon>
        <taxon>Pseudomonadati</taxon>
        <taxon>Pseudomonadota</taxon>
        <taxon>Betaproteobacteria</taxon>
        <taxon>Burkholderiales</taxon>
        <taxon>Burkholderiaceae</taxon>
        <taxon>Burkholderia</taxon>
        <taxon>pseudomallei group</taxon>
    </lineage>
</organism>
<protein>
    <recommendedName>
        <fullName evidence="1">Nod factor export ATP-binding protein I</fullName>
        <ecNumber evidence="1">7.6.2.-</ecNumber>
    </recommendedName>
    <alternativeName>
        <fullName evidence="1">Nodulation ATP-binding protein I</fullName>
    </alternativeName>
</protein>
<proteinExistence type="inferred from homology"/>